<gene>
    <name type="primary">ndhF</name>
</gene>
<evidence type="ECO:0000250" key="1"/>
<evidence type="ECO:0000255" key="2"/>
<evidence type="ECO:0000305" key="3"/>
<sequence length="741" mass="84180">MEQTYQYAWIIPFLPLPVPMLIGLGLLLFPTATKSLRRMWAFQSVLLLSIVMIFSMNLSIQQINSSSVYQYVWSWIINNDFSLEFGYLIDPLTSIMSILITTVGILVLIYSDNYMSHDHGYLRFFAYMSFFSTSMLGLVTSSNLIQIYIFWELVGMCSYLLIGFWFTRPVAAKACQKAFVTNRVGDFGLLLGILGFYWITGSFEFRDLFQIFNNLISTNQVNFLFVTLCAVLLFAGAIAKSAQFPLHVWLPDAMEGPTPISALIHAATMVAAGIFLVARLLPLFIVIPHIMNFISLIGIITVFLGATLALAQKDINRGLAYSTMSQLGYMMLALGMGSYRSALFHLITHAYSKALLFLGSGSVIHSMETLVGYCPKKSQNMVLMGGLTKHVPITKNSFLLGTLSLCGIPPLACFWSKDEILNDSWLYSPIFAIIAWSTAGLTAFYMCRIYLLTFEGHLNVHFQNYSGKRNTPLYSISLWGKEGSKISNKNFRLVTLLKMNKTGRPSFFSNRVYKIDENVRNMTPPFLSIPNFGNIKTSLYPYESDNTMLFPILILFIFTLFVGFLGIPLNQDVDILTKWLTPSINLLHKNSNNSIDWYEFCKDALFSVSIASFGIFIAFFLYKPVYSSFQNLDLINSFFKMGPRRNFYDKIKNAIYDWSYNRGYIDAFYGTFFIVGTRKLAEFTHFFDRRIIDGIPNGVGLISFFVAEVIKSVGGGRISSYLFFYFSYVSIFLVIYYFLNL</sequence>
<reference key="1">
    <citation type="journal article" date="1995" name="Proc. Natl. Acad. Sci. U.S.A.">
        <title>ndhF sequence evolution and the major clades in the sunflower family.</title>
        <authorList>
            <person name="Kim K.-J."/>
            <person name="Jansen R.K."/>
        </authorList>
    </citation>
    <scope>NUCLEOTIDE SEQUENCE [GENOMIC DNA]</scope>
</reference>
<dbReference type="EC" id="7.1.1.-"/>
<dbReference type="EMBL" id="L39449">
    <property type="protein sequence ID" value="AAC37726.1"/>
    <property type="molecule type" value="Genomic_DNA"/>
</dbReference>
<dbReference type="SMR" id="P51097"/>
<dbReference type="GO" id="GO:0009535">
    <property type="term" value="C:chloroplast thylakoid membrane"/>
    <property type="evidence" value="ECO:0007669"/>
    <property type="project" value="UniProtKB-SubCell"/>
</dbReference>
<dbReference type="GO" id="GO:0008137">
    <property type="term" value="F:NADH dehydrogenase (ubiquinone) activity"/>
    <property type="evidence" value="ECO:0007669"/>
    <property type="project" value="InterPro"/>
</dbReference>
<dbReference type="GO" id="GO:0048038">
    <property type="term" value="F:quinone binding"/>
    <property type="evidence" value="ECO:0007669"/>
    <property type="project" value="UniProtKB-KW"/>
</dbReference>
<dbReference type="GO" id="GO:0042773">
    <property type="term" value="P:ATP synthesis coupled electron transport"/>
    <property type="evidence" value="ECO:0007669"/>
    <property type="project" value="InterPro"/>
</dbReference>
<dbReference type="GO" id="GO:0015990">
    <property type="term" value="P:electron transport coupled proton transport"/>
    <property type="evidence" value="ECO:0007669"/>
    <property type="project" value="TreeGrafter"/>
</dbReference>
<dbReference type="Gene3D" id="1.20.5.2700">
    <property type="match status" value="1"/>
</dbReference>
<dbReference type="InterPro" id="IPR002128">
    <property type="entry name" value="NADH_UbQ_OxRdtase_chlpt_su5_C"/>
</dbReference>
<dbReference type="InterPro" id="IPR018393">
    <property type="entry name" value="NADHpl_OxRdtase_5_subgr"/>
</dbReference>
<dbReference type="InterPro" id="IPR001750">
    <property type="entry name" value="ND/Mrp_TM"/>
</dbReference>
<dbReference type="InterPro" id="IPR003945">
    <property type="entry name" value="NU5C-like"/>
</dbReference>
<dbReference type="InterPro" id="IPR001516">
    <property type="entry name" value="Proton_antipo_N"/>
</dbReference>
<dbReference type="NCBIfam" id="TIGR01974">
    <property type="entry name" value="NDH_I_L"/>
    <property type="match status" value="1"/>
</dbReference>
<dbReference type="NCBIfam" id="NF005141">
    <property type="entry name" value="PRK06590.1"/>
    <property type="match status" value="1"/>
</dbReference>
<dbReference type="PANTHER" id="PTHR42829">
    <property type="entry name" value="NADH-UBIQUINONE OXIDOREDUCTASE CHAIN 5"/>
    <property type="match status" value="1"/>
</dbReference>
<dbReference type="PANTHER" id="PTHR42829:SF2">
    <property type="entry name" value="NADH-UBIQUINONE OXIDOREDUCTASE CHAIN 5"/>
    <property type="match status" value="1"/>
</dbReference>
<dbReference type="Pfam" id="PF01010">
    <property type="entry name" value="Proton_antipo_C"/>
    <property type="match status" value="1"/>
</dbReference>
<dbReference type="Pfam" id="PF00361">
    <property type="entry name" value="Proton_antipo_M"/>
    <property type="match status" value="1"/>
</dbReference>
<dbReference type="Pfam" id="PF00662">
    <property type="entry name" value="Proton_antipo_N"/>
    <property type="match status" value="1"/>
</dbReference>
<dbReference type="PRINTS" id="PR01434">
    <property type="entry name" value="NADHDHGNASE5"/>
</dbReference>
<dbReference type="PRINTS" id="PR01435">
    <property type="entry name" value="NPOXDRDTASE5"/>
</dbReference>
<proteinExistence type="inferred from homology"/>
<geneLocation type="chloroplast"/>
<feature type="chain" id="PRO_0000118170" description="NAD(P)H-quinone oxidoreductase subunit 5, chloroplastic">
    <location>
        <begin position="1"/>
        <end position="741"/>
    </location>
</feature>
<feature type="transmembrane region" description="Helical" evidence="2">
    <location>
        <begin position="9"/>
        <end position="29"/>
    </location>
</feature>
<feature type="transmembrane region" description="Helical" evidence="2">
    <location>
        <begin position="40"/>
        <end position="60"/>
    </location>
</feature>
<feature type="transmembrane region" description="Helical" evidence="2">
    <location>
        <begin position="89"/>
        <end position="109"/>
    </location>
</feature>
<feature type="transmembrane region" description="Helical" evidence="2">
    <location>
        <begin position="125"/>
        <end position="145"/>
    </location>
</feature>
<feature type="transmembrane region" description="Helical" evidence="2">
    <location>
        <begin position="147"/>
        <end position="167"/>
    </location>
</feature>
<feature type="transmembrane region" description="Helical" evidence="2">
    <location>
        <begin position="185"/>
        <end position="205"/>
    </location>
</feature>
<feature type="transmembrane region" description="Helical" evidence="2">
    <location>
        <begin position="219"/>
        <end position="239"/>
    </location>
</feature>
<feature type="transmembrane region" description="Helical" evidence="2">
    <location>
        <begin position="258"/>
        <end position="278"/>
    </location>
</feature>
<feature type="transmembrane region" description="Helical" evidence="2">
    <location>
        <begin position="289"/>
        <end position="311"/>
    </location>
</feature>
<feature type="transmembrane region" description="Helical" evidence="2">
    <location>
        <begin position="327"/>
        <end position="347"/>
    </location>
</feature>
<feature type="transmembrane region" description="Helical" evidence="2">
    <location>
        <begin position="354"/>
        <end position="374"/>
    </location>
</feature>
<feature type="transmembrane region" description="Helical" evidence="2">
    <location>
        <begin position="396"/>
        <end position="416"/>
    </location>
</feature>
<feature type="transmembrane region" description="Helical" evidence="2">
    <location>
        <begin position="425"/>
        <end position="445"/>
    </location>
</feature>
<feature type="transmembrane region" description="Helical" evidence="2">
    <location>
        <begin position="549"/>
        <end position="569"/>
    </location>
</feature>
<feature type="transmembrane region" description="Helical" evidence="2">
    <location>
        <begin position="605"/>
        <end position="625"/>
    </location>
</feature>
<feature type="transmembrane region" description="Helical" evidence="2">
    <location>
        <begin position="721"/>
        <end position="741"/>
    </location>
</feature>
<organism>
    <name type="scientific">Symphyotrichum cordifolium</name>
    <name type="common">Heart-leaved aster</name>
    <name type="synonym">Aster cordifolius</name>
    <dbReference type="NCBI Taxonomy" id="41480"/>
    <lineage>
        <taxon>Eukaryota</taxon>
        <taxon>Viridiplantae</taxon>
        <taxon>Streptophyta</taxon>
        <taxon>Embryophyta</taxon>
        <taxon>Tracheophyta</taxon>
        <taxon>Spermatophyta</taxon>
        <taxon>Magnoliopsida</taxon>
        <taxon>eudicotyledons</taxon>
        <taxon>Gunneridae</taxon>
        <taxon>Pentapetalae</taxon>
        <taxon>asterids</taxon>
        <taxon>campanulids</taxon>
        <taxon>Asterales</taxon>
        <taxon>Asteraceae</taxon>
        <taxon>Asteroideae</taxon>
        <taxon>Astereae</taxon>
        <taxon>North American clade</taxon>
        <taxon>Symphiotrichinae</taxon>
        <taxon>Symphyotrichum</taxon>
    </lineage>
</organism>
<protein>
    <recommendedName>
        <fullName>NAD(P)H-quinone oxidoreductase subunit 5, chloroplastic</fullName>
        <ecNumber>7.1.1.-</ecNumber>
    </recommendedName>
    <alternativeName>
        <fullName>NAD(P)H dehydrogenase subunit 5</fullName>
    </alternativeName>
    <alternativeName>
        <fullName>NADH-plastoquinone oxidoreductase subunit 5</fullName>
    </alternativeName>
</protein>
<comment type="function">
    <text evidence="1">NDH shuttles electrons from NAD(P)H:plastoquinone, via FMN and iron-sulfur (Fe-S) centers, to quinones in the photosynthetic chain and possibly in a chloroplast respiratory chain. The immediate electron acceptor for the enzyme in this species is believed to be plastoquinone. Couples the redox reaction to proton translocation, and thus conserves the redox energy in a proton gradient (By similarity).</text>
</comment>
<comment type="catalytic activity">
    <reaction>
        <text>a plastoquinone + NADH + (n+1) H(+)(in) = a plastoquinol + NAD(+) + n H(+)(out)</text>
        <dbReference type="Rhea" id="RHEA:42608"/>
        <dbReference type="Rhea" id="RHEA-COMP:9561"/>
        <dbReference type="Rhea" id="RHEA-COMP:9562"/>
        <dbReference type="ChEBI" id="CHEBI:15378"/>
        <dbReference type="ChEBI" id="CHEBI:17757"/>
        <dbReference type="ChEBI" id="CHEBI:57540"/>
        <dbReference type="ChEBI" id="CHEBI:57945"/>
        <dbReference type="ChEBI" id="CHEBI:62192"/>
    </reaction>
</comment>
<comment type="catalytic activity">
    <reaction>
        <text>a plastoquinone + NADPH + (n+1) H(+)(in) = a plastoquinol + NADP(+) + n H(+)(out)</text>
        <dbReference type="Rhea" id="RHEA:42612"/>
        <dbReference type="Rhea" id="RHEA-COMP:9561"/>
        <dbReference type="Rhea" id="RHEA-COMP:9562"/>
        <dbReference type="ChEBI" id="CHEBI:15378"/>
        <dbReference type="ChEBI" id="CHEBI:17757"/>
        <dbReference type="ChEBI" id="CHEBI:57783"/>
        <dbReference type="ChEBI" id="CHEBI:58349"/>
        <dbReference type="ChEBI" id="CHEBI:62192"/>
    </reaction>
</comment>
<comment type="subunit">
    <text evidence="1">NDH is composed of at least 16 different subunits, 5 of which are encoded in the nucleus.</text>
</comment>
<comment type="subcellular location">
    <subcellularLocation>
        <location evidence="1">Plastid</location>
        <location evidence="1">Chloroplast thylakoid membrane</location>
        <topology evidence="1">Multi-pass membrane protein</topology>
    </subcellularLocation>
</comment>
<comment type="similarity">
    <text evidence="3">Belongs to the complex I subunit 5 family.</text>
</comment>
<accession>P51097</accession>
<name>NU5C_SYMCR</name>
<keyword id="KW-0150">Chloroplast</keyword>
<keyword id="KW-0472">Membrane</keyword>
<keyword id="KW-0520">NAD</keyword>
<keyword id="KW-0521">NADP</keyword>
<keyword id="KW-0934">Plastid</keyword>
<keyword id="KW-0618">Plastoquinone</keyword>
<keyword id="KW-0874">Quinone</keyword>
<keyword id="KW-0793">Thylakoid</keyword>
<keyword id="KW-1278">Translocase</keyword>
<keyword id="KW-0812">Transmembrane</keyword>
<keyword id="KW-1133">Transmembrane helix</keyword>
<keyword id="KW-0813">Transport</keyword>